<accession>Q133H9</accession>
<sequence>MTAPLTLVLIPARMAATRLPGKPLLDIGGVPMIVHVLRRALAASIGRVAVATDTPEIAEAVIAHGGEVVMTRADHPSGSDRIHEALQTLDPERRIETVINLQGDFPTIRPEQIGAVLAPLADPAVDIATLAAEIHTEEESTNPNVVKVVGSPIRDNLLRALYFTRATAPYGDGPRYHHIGLYAYRRAALERFVSLPPSPLEQREKLEQLRALEAGMRIDVGIVDSVPRGVDTPADLETARRALGF</sequence>
<gene>
    <name evidence="1" type="primary">kdsB</name>
    <name type="ordered locus">RPD_3537</name>
</gene>
<organism>
    <name type="scientific">Rhodopseudomonas palustris (strain BisB5)</name>
    <dbReference type="NCBI Taxonomy" id="316057"/>
    <lineage>
        <taxon>Bacteria</taxon>
        <taxon>Pseudomonadati</taxon>
        <taxon>Pseudomonadota</taxon>
        <taxon>Alphaproteobacteria</taxon>
        <taxon>Hyphomicrobiales</taxon>
        <taxon>Nitrobacteraceae</taxon>
        <taxon>Rhodopseudomonas</taxon>
    </lineage>
</organism>
<reference key="1">
    <citation type="submission" date="2006-03" db="EMBL/GenBank/DDBJ databases">
        <title>Complete sequence of Rhodopseudomonas palustris BisB5.</title>
        <authorList>
            <consortium name="US DOE Joint Genome Institute"/>
            <person name="Copeland A."/>
            <person name="Lucas S."/>
            <person name="Lapidus A."/>
            <person name="Barry K."/>
            <person name="Detter J.C."/>
            <person name="Glavina del Rio T."/>
            <person name="Hammon N."/>
            <person name="Israni S."/>
            <person name="Dalin E."/>
            <person name="Tice H."/>
            <person name="Pitluck S."/>
            <person name="Chain P."/>
            <person name="Malfatti S."/>
            <person name="Shin M."/>
            <person name="Vergez L."/>
            <person name="Schmutz J."/>
            <person name="Larimer F."/>
            <person name="Land M."/>
            <person name="Hauser L."/>
            <person name="Pelletier D.A."/>
            <person name="Kyrpides N."/>
            <person name="Lykidis A."/>
            <person name="Oda Y."/>
            <person name="Harwood C.S."/>
            <person name="Richardson P."/>
        </authorList>
    </citation>
    <scope>NUCLEOTIDE SEQUENCE [LARGE SCALE GENOMIC DNA]</scope>
    <source>
        <strain>BisB5</strain>
    </source>
</reference>
<feature type="chain" id="PRO_0000370138" description="3-deoxy-manno-octulosonate cytidylyltransferase">
    <location>
        <begin position="1"/>
        <end position="245"/>
    </location>
</feature>
<protein>
    <recommendedName>
        <fullName evidence="1">3-deoxy-manno-octulosonate cytidylyltransferase</fullName>
        <ecNumber evidence="1">2.7.7.38</ecNumber>
    </recommendedName>
    <alternativeName>
        <fullName evidence="1">CMP-2-keto-3-deoxyoctulosonic acid synthase</fullName>
        <shortName evidence="1">CKS</shortName>
        <shortName evidence="1">CMP-KDO synthase</shortName>
    </alternativeName>
</protein>
<name>KDSB_RHOPS</name>
<comment type="function">
    <text evidence="1">Activates KDO (a required 8-carbon sugar) for incorporation into bacterial lipopolysaccharide in Gram-negative bacteria.</text>
</comment>
<comment type="catalytic activity">
    <reaction evidence="1">
        <text>3-deoxy-alpha-D-manno-oct-2-ulosonate + CTP = CMP-3-deoxy-beta-D-manno-octulosonate + diphosphate</text>
        <dbReference type="Rhea" id="RHEA:23448"/>
        <dbReference type="ChEBI" id="CHEBI:33019"/>
        <dbReference type="ChEBI" id="CHEBI:37563"/>
        <dbReference type="ChEBI" id="CHEBI:85986"/>
        <dbReference type="ChEBI" id="CHEBI:85987"/>
        <dbReference type="EC" id="2.7.7.38"/>
    </reaction>
</comment>
<comment type="pathway">
    <text evidence="1">Nucleotide-sugar biosynthesis; CMP-3-deoxy-D-manno-octulosonate biosynthesis; CMP-3-deoxy-D-manno-octulosonate from 3-deoxy-D-manno-octulosonate and CTP: step 1/1.</text>
</comment>
<comment type="pathway">
    <text evidence="1">Bacterial outer membrane biogenesis; lipopolysaccharide biosynthesis.</text>
</comment>
<comment type="subcellular location">
    <subcellularLocation>
        <location evidence="1">Cytoplasm</location>
    </subcellularLocation>
</comment>
<comment type="similarity">
    <text evidence="1">Belongs to the KdsB family.</text>
</comment>
<proteinExistence type="inferred from homology"/>
<evidence type="ECO:0000255" key="1">
    <source>
        <dbReference type="HAMAP-Rule" id="MF_00057"/>
    </source>
</evidence>
<keyword id="KW-0963">Cytoplasm</keyword>
<keyword id="KW-0448">Lipopolysaccharide biosynthesis</keyword>
<keyword id="KW-0548">Nucleotidyltransferase</keyword>
<keyword id="KW-0808">Transferase</keyword>
<dbReference type="EC" id="2.7.7.38" evidence="1"/>
<dbReference type="EMBL" id="CP000283">
    <property type="protein sequence ID" value="ABE40760.1"/>
    <property type="molecule type" value="Genomic_DNA"/>
</dbReference>
<dbReference type="SMR" id="Q133H9"/>
<dbReference type="STRING" id="316057.RPD_3537"/>
<dbReference type="KEGG" id="rpd:RPD_3537"/>
<dbReference type="eggNOG" id="COG1212">
    <property type="taxonomic scope" value="Bacteria"/>
</dbReference>
<dbReference type="HOGENOM" id="CLU_065038_0_1_5"/>
<dbReference type="BioCyc" id="RPAL316057:RPD_RS17790-MONOMER"/>
<dbReference type="UniPathway" id="UPA00030"/>
<dbReference type="UniPathway" id="UPA00358">
    <property type="reaction ID" value="UER00476"/>
</dbReference>
<dbReference type="Proteomes" id="UP000001818">
    <property type="component" value="Chromosome"/>
</dbReference>
<dbReference type="GO" id="GO:0005829">
    <property type="term" value="C:cytosol"/>
    <property type="evidence" value="ECO:0007669"/>
    <property type="project" value="TreeGrafter"/>
</dbReference>
<dbReference type="GO" id="GO:0008690">
    <property type="term" value="F:3-deoxy-manno-octulosonate cytidylyltransferase activity"/>
    <property type="evidence" value="ECO:0007669"/>
    <property type="project" value="UniProtKB-UniRule"/>
</dbReference>
<dbReference type="GO" id="GO:0033468">
    <property type="term" value="P:CMP-keto-3-deoxy-D-manno-octulosonic acid biosynthetic process"/>
    <property type="evidence" value="ECO:0007669"/>
    <property type="project" value="UniProtKB-UniRule"/>
</dbReference>
<dbReference type="GO" id="GO:0009103">
    <property type="term" value="P:lipopolysaccharide biosynthetic process"/>
    <property type="evidence" value="ECO:0007669"/>
    <property type="project" value="UniProtKB-UniRule"/>
</dbReference>
<dbReference type="CDD" id="cd02517">
    <property type="entry name" value="CMP-KDO-Synthetase"/>
    <property type="match status" value="1"/>
</dbReference>
<dbReference type="Gene3D" id="3.90.550.10">
    <property type="entry name" value="Spore Coat Polysaccharide Biosynthesis Protein SpsA, Chain A"/>
    <property type="match status" value="1"/>
</dbReference>
<dbReference type="HAMAP" id="MF_00057">
    <property type="entry name" value="KdsB"/>
    <property type="match status" value="1"/>
</dbReference>
<dbReference type="InterPro" id="IPR003329">
    <property type="entry name" value="Cytidylyl_trans"/>
</dbReference>
<dbReference type="InterPro" id="IPR004528">
    <property type="entry name" value="KdsB"/>
</dbReference>
<dbReference type="InterPro" id="IPR029044">
    <property type="entry name" value="Nucleotide-diphossugar_trans"/>
</dbReference>
<dbReference type="NCBIfam" id="TIGR00466">
    <property type="entry name" value="kdsB"/>
    <property type="match status" value="1"/>
</dbReference>
<dbReference type="NCBIfam" id="NF003948">
    <property type="entry name" value="PRK05450.1-1"/>
    <property type="match status" value="1"/>
</dbReference>
<dbReference type="NCBIfam" id="NF003952">
    <property type="entry name" value="PRK05450.1-5"/>
    <property type="match status" value="1"/>
</dbReference>
<dbReference type="PANTHER" id="PTHR42866">
    <property type="entry name" value="3-DEOXY-MANNO-OCTULOSONATE CYTIDYLYLTRANSFERASE"/>
    <property type="match status" value="1"/>
</dbReference>
<dbReference type="PANTHER" id="PTHR42866:SF2">
    <property type="entry name" value="3-DEOXY-MANNO-OCTULOSONATE CYTIDYLYLTRANSFERASE, MITOCHONDRIAL"/>
    <property type="match status" value="1"/>
</dbReference>
<dbReference type="Pfam" id="PF02348">
    <property type="entry name" value="CTP_transf_3"/>
    <property type="match status" value="1"/>
</dbReference>
<dbReference type="SUPFAM" id="SSF53448">
    <property type="entry name" value="Nucleotide-diphospho-sugar transferases"/>
    <property type="match status" value="1"/>
</dbReference>